<evidence type="ECO:0000255" key="1">
    <source>
        <dbReference type="HAMAP-Rule" id="MF_00821"/>
    </source>
</evidence>
<protein>
    <recommendedName>
        <fullName evidence="1">Protein-export protein SecB</fullName>
    </recommendedName>
</protein>
<dbReference type="EMBL" id="CU928163">
    <property type="protein sequence ID" value="CAR15267.1"/>
    <property type="molecule type" value="Genomic_DNA"/>
</dbReference>
<dbReference type="RefSeq" id="WP_000003377.1">
    <property type="nucleotide sequence ID" value="NC_011751.1"/>
</dbReference>
<dbReference type="RefSeq" id="YP_002414765.1">
    <property type="nucleotide sequence ID" value="NC_011751.1"/>
</dbReference>
<dbReference type="SMR" id="B7NER6"/>
<dbReference type="STRING" id="585056.ECUMN_4126"/>
<dbReference type="GeneID" id="86944403"/>
<dbReference type="KEGG" id="eum:ECUMN_4126"/>
<dbReference type="PATRIC" id="fig|585056.7.peg.4300"/>
<dbReference type="HOGENOM" id="CLU_111574_1_0_6"/>
<dbReference type="Proteomes" id="UP000007097">
    <property type="component" value="Chromosome"/>
</dbReference>
<dbReference type="GO" id="GO:0005737">
    <property type="term" value="C:cytoplasm"/>
    <property type="evidence" value="ECO:0007669"/>
    <property type="project" value="UniProtKB-SubCell"/>
</dbReference>
<dbReference type="GO" id="GO:0051082">
    <property type="term" value="F:unfolded protein binding"/>
    <property type="evidence" value="ECO:0007669"/>
    <property type="project" value="InterPro"/>
</dbReference>
<dbReference type="GO" id="GO:0006457">
    <property type="term" value="P:protein folding"/>
    <property type="evidence" value="ECO:0007669"/>
    <property type="project" value="UniProtKB-UniRule"/>
</dbReference>
<dbReference type="GO" id="GO:0051262">
    <property type="term" value="P:protein tetramerization"/>
    <property type="evidence" value="ECO:0007669"/>
    <property type="project" value="InterPro"/>
</dbReference>
<dbReference type="GO" id="GO:0015031">
    <property type="term" value="P:protein transport"/>
    <property type="evidence" value="ECO:0007669"/>
    <property type="project" value="UniProtKB-UniRule"/>
</dbReference>
<dbReference type="CDD" id="cd00557">
    <property type="entry name" value="Translocase_SecB"/>
    <property type="match status" value="1"/>
</dbReference>
<dbReference type="FunFam" id="3.10.420.10:FF:000001">
    <property type="entry name" value="Protein-export chaperone SecB"/>
    <property type="match status" value="1"/>
</dbReference>
<dbReference type="Gene3D" id="3.10.420.10">
    <property type="entry name" value="SecB-like"/>
    <property type="match status" value="1"/>
</dbReference>
<dbReference type="HAMAP" id="MF_00821">
    <property type="entry name" value="SecB"/>
    <property type="match status" value="1"/>
</dbReference>
<dbReference type="InterPro" id="IPR003708">
    <property type="entry name" value="SecB"/>
</dbReference>
<dbReference type="InterPro" id="IPR035958">
    <property type="entry name" value="SecB-like_sf"/>
</dbReference>
<dbReference type="NCBIfam" id="NF004390">
    <property type="entry name" value="PRK05751.1-1"/>
    <property type="match status" value="1"/>
</dbReference>
<dbReference type="NCBIfam" id="NF004393">
    <property type="entry name" value="PRK05751.1-4"/>
    <property type="match status" value="1"/>
</dbReference>
<dbReference type="NCBIfam" id="TIGR00809">
    <property type="entry name" value="secB"/>
    <property type="match status" value="1"/>
</dbReference>
<dbReference type="PANTHER" id="PTHR36918">
    <property type="match status" value="1"/>
</dbReference>
<dbReference type="PANTHER" id="PTHR36918:SF1">
    <property type="entry name" value="PROTEIN-EXPORT PROTEIN SECB"/>
    <property type="match status" value="1"/>
</dbReference>
<dbReference type="Pfam" id="PF02556">
    <property type="entry name" value="SecB"/>
    <property type="match status" value="1"/>
</dbReference>
<dbReference type="PRINTS" id="PR01594">
    <property type="entry name" value="SECBCHAPRONE"/>
</dbReference>
<dbReference type="SUPFAM" id="SSF54611">
    <property type="entry name" value="SecB-like"/>
    <property type="match status" value="1"/>
</dbReference>
<keyword id="KW-0143">Chaperone</keyword>
<keyword id="KW-0963">Cytoplasm</keyword>
<keyword id="KW-0653">Protein transport</keyword>
<keyword id="KW-0811">Translocation</keyword>
<keyword id="KW-0813">Transport</keyword>
<organism>
    <name type="scientific">Escherichia coli O17:K52:H18 (strain UMN026 / ExPEC)</name>
    <dbReference type="NCBI Taxonomy" id="585056"/>
    <lineage>
        <taxon>Bacteria</taxon>
        <taxon>Pseudomonadati</taxon>
        <taxon>Pseudomonadota</taxon>
        <taxon>Gammaproteobacteria</taxon>
        <taxon>Enterobacterales</taxon>
        <taxon>Enterobacteriaceae</taxon>
        <taxon>Escherichia</taxon>
    </lineage>
</organism>
<proteinExistence type="inferred from homology"/>
<gene>
    <name evidence="1" type="primary">secB</name>
    <name type="ordered locus">ECUMN_4126</name>
</gene>
<sequence length="155" mass="17277">MSEQNNTEMTFQIQRIYTKDISFEAPNAPHVFQKDWQPEVKLDLDTASSQLADDVYEVVLRVTVTASLGEETAFLCEVQQGGIFSIAGIEGTQMAHCLGAYCPNILFPYARECITSMVSRGTFPQLNLAPVNFDALFMNYLQQQAGEGTEEHQDA</sequence>
<reference key="1">
    <citation type="journal article" date="2009" name="PLoS Genet.">
        <title>Organised genome dynamics in the Escherichia coli species results in highly diverse adaptive paths.</title>
        <authorList>
            <person name="Touchon M."/>
            <person name="Hoede C."/>
            <person name="Tenaillon O."/>
            <person name="Barbe V."/>
            <person name="Baeriswyl S."/>
            <person name="Bidet P."/>
            <person name="Bingen E."/>
            <person name="Bonacorsi S."/>
            <person name="Bouchier C."/>
            <person name="Bouvet O."/>
            <person name="Calteau A."/>
            <person name="Chiapello H."/>
            <person name="Clermont O."/>
            <person name="Cruveiller S."/>
            <person name="Danchin A."/>
            <person name="Diard M."/>
            <person name="Dossat C."/>
            <person name="Karoui M.E."/>
            <person name="Frapy E."/>
            <person name="Garry L."/>
            <person name="Ghigo J.M."/>
            <person name="Gilles A.M."/>
            <person name="Johnson J."/>
            <person name="Le Bouguenec C."/>
            <person name="Lescat M."/>
            <person name="Mangenot S."/>
            <person name="Martinez-Jehanne V."/>
            <person name="Matic I."/>
            <person name="Nassif X."/>
            <person name="Oztas S."/>
            <person name="Petit M.A."/>
            <person name="Pichon C."/>
            <person name="Rouy Z."/>
            <person name="Ruf C.S."/>
            <person name="Schneider D."/>
            <person name="Tourret J."/>
            <person name="Vacherie B."/>
            <person name="Vallenet D."/>
            <person name="Medigue C."/>
            <person name="Rocha E.P.C."/>
            <person name="Denamur E."/>
        </authorList>
    </citation>
    <scope>NUCLEOTIDE SEQUENCE [LARGE SCALE GENOMIC DNA]</scope>
    <source>
        <strain>UMN026 / ExPEC</strain>
    </source>
</reference>
<accession>B7NER6</accession>
<comment type="function">
    <text evidence="1">One of the proteins required for the normal export of preproteins out of the cell cytoplasm. It is a molecular chaperone that binds to a subset of precursor proteins, maintaining them in a translocation-competent state. It also specifically binds to its receptor SecA.</text>
</comment>
<comment type="subunit">
    <text evidence="1">Homotetramer, a dimer of dimers. One homotetramer interacts with 1 SecA dimer.</text>
</comment>
<comment type="subcellular location">
    <subcellularLocation>
        <location evidence="1">Cytoplasm</location>
    </subcellularLocation>
</comment>
<comment type="similarity">
    <text evidence="1">Belongs to the SecB family.</text>
</comment>
<feature type="chain" id="PRO_1000195321" description="Protein-export protein SecB">
    <location>
        <begin position="1"/>
        <end position="155"/>
    </location>
</feature>
<name>SECB_ECOLU</name>